<gene>
    <name type="primary">ETT1</name>
    <name type="ORF">EC1118_1O4_2498g</name>
</gene>
<reference key="1">
    <citation type="journal article" date="2009" name="Proc. Natl. Acad. Sci. U.S.A.">
        <title>Eukaryote-to-eukaryote gene transfer events revealed by the genome sequence of the wine yeast Saccharomyces cerevisiae EC1118.</title>
        <authorList>
            <person name="Novo M."/>
            <person name="Bigey F."/>
            <person name="Beyne E."/>
            <person name="Galeote V."/>
            <person name="Gavory F."/>
            <person name="Mallet S."/>
            <person name="Cambon B."/>
            <person name="Legras J.-L."/>
            <person name="Wincker P."/>
            <person name="Casaregola S."/>
            <person name="Dequin S."/>
        </authorList>
    </citation>
    <scope>NUCLEOTIDE SEQUENCE [LARGE SCALE GENOMIC DNA]</scope>
    <source>
        <strain>Lalvin EC1118 / Prise de mousse</strain>
    </source>
</reference>
<protein>
    <recommendedName>
        <fullName>Enhancer of translation termination 1</fullName>
    </recommendedName>
</protein>
<evidence type="ECO:0000250" key="1"/>
<evidence type="ECO:0000250" key="2">
    <source>
        <dbReference type="UniProtKB" id="Q08421"/>
    </source>
</evidence>
<evidence type="ECO:0000256" key="3">
    <source>
        <dbReference type="SAM" id="MobiDB-lite"/>
    </source>
</evidence>
<evidence type="ECO:0000305" key="4"/>
<comment type="function">
    <text evidence="1">Required for correct translation termination and probably involved in regulation of hypoxic gene expression in association TPA1. Inhibits replication of Brome mosaic virus (By similarity).</text>
</comment>
<comment type="subunit">
    <text evidence="1">Interacts with STM1.</text>
</comment>
<comment type="subcellular location">
    <subcellularLocation>
        <location evidence="1">Nucleus</location>
    </subcellularLocation>
</comment>
<comment type="similarity">
    <text evidence="4">Belongs to the ETT1 family.</text>
</comment>
<accession>C8ZI12</accession>
<proteinExistence type="inferred from homology"/>
<keyword id="KW-0539">Nucleus</keyword>
<keyword id="KW-0597">Phosphoprotein</keyword>
<keyword id="KW-0804">Transcription</keyword>
<keyword id="KW-0805">Transcription regulation</keyword>
<keyword id="KW-0810">Translation regulation</keyword>
<feature type="chain" id="PRO_0000406629" description="Enhancer of translation termination 1">
    <location>
        <begin position="1"/>
        <end position="412"/>
    </location>
</feature>
<feature type="region of interest" description="Disordered" evidence="3">
    <location>
        <begin position="1"/>
        <end position="45"/>
    </location>
</feature>
<feature type="compositionally biased region" description="Basic and acidic residues" evidence="3">
    <location>
        <begin position="17"/>
        <end position="31"/>
    </location>
</feature>
<feature type="compositionally biased region" description="Polar residues" evidence="3">
    <location>
        <begin position="32"/>
        <end position="41"/>
    </location>
</feature>
<feature type="modified residue" description="Phosphoserine" evidence="2">
    <location>
        <position position="30"/>
    </location>
</feature>
<dbReference type="EMBL" id="FN394216">
    <property type="protein sequence ID" value="CAY86337.1"/>
    <property type="molecule type" value="Genomic_DNA"/>
</dbReference>
<dbReference type="SMR" id="C8ZI12"/>
<dbReference type="HOGENOM" id="CLU_050427_0_0_1"/>
<dbReference type="OrthoDB" id="37847at4893"/>
<dbReference type="Proteomes" id="UP000000286">
    <property type="component" value="Chromosome XV, Scaffold EC1118_1O4"/>
</dbReference>
<dbReference type="GO" id="GO:0005634">
    <property type="term" value="C:nucleus"/>
    <property type="evidence" value="ECO:0007669"/>
    <property type="project" value="UniProtKB-SubCell"/>
</dbReference>
<dbReference type="GO" id="GO:2000640">
    <property type="term" value="P:positive regulation of SREBP signaling pathway"/>
    <property type="evidence" value="ECO:0007669"/>
    <property type="project" value="TreeGrafter"/>
</dbReference>
<dbReference type="GO" id="GO:0006417">
    <property type="term" value="P:regulation of translation"/>
    <property type="evidence" value="ECO:0007669"/>
    <property type="project" value="UniProtKB-KW"/>
</dbReference>
<dbReference type="Gene3D" id="1.25.40.10">
    <property type="entry name" value="Tetratricopeptide repeat domain"/>
    <property type="match status" value="1"/>
</dbReference>
<dbReference type="InterPro" id="IPR024318">
    <property type="entry name" value="Nro1/ETT1"/>
</dbReference>
<dbReference type="InterPro" id="IPR011990">
    <property type="entry name" value="TPR-like_helical_dom_sf"/>
</dbReference>
<dbReference type="PANTHER" id="PTHR28290">
    <property type="entry name" value="ENHANCER OF TRANSLATION TERMINATION 1"/>
    <property type="match status" value="1"/>
</dbReference>
<dbReference type="PANTHER" id="PTHR28290:SF1">
    <property type="entry name" value="ENHANCER OF TRANSLATION TERMINATION 1"/>
    <property type="match status" value="1"/>
</dbReference>
<dbReference type="Pfam" id="PF12753">
    <property type="entry name" value="Nro1"/>
    <property type="match status" value="1"/>
</dbReference>
<organism>
    <name type="scientific">Saccharomyces cerevisiae (strain Lalvin EC1118 / Prise de mousse)</name>
    <name type="common">Baker's yeast</name>
    <dbReference type="NCBI Taxonomy" id="643680"/>
    <lineage>
        <taxon>Eukaryota</taxon>
        <taxon>Fungi</taxon>
        <taxon>Dikarya</taxon>
        <taxon>Ascomycota</taxon>
        <taxon>Saccharomycotina</taxon>
        <taxon>Saccharomycetes</taxon>
        <taxon>Saccharomycetales</taxon>
        <taxon>Saccharomycetaceae</taxon>
        <taxon>Saccharomyces</taxon>
    </lineage>
</organism>
<name>ETT1_YEAS8</name>
<sequence>MAKRPLGLGKQSREKKRKVESVEKKSDEPSRESTPVRSQMSVELDDDADLDDELAQLKGLWSKYFHSDRDDEYVLNGIVHECDRLLRLSEEDKEIKKTLNDIFHGIYALALSELTIFKAGDEEATEEKRKKDVSSFFENAIERVELGLSHFPESQFLKLVLAKIIFQRIPLEYISNLHLKSKDKKLDLVGQLEHGKKHFSIYENDTEFTFEILQMVNDLLDIVENFGREQSIQEGIDSDNEEEEELIDIELEPEHPVYPLQQSLEANYEWLRNHFDKLLDNTNTDMKIYASIANTLGELYLKKAEEPSKVFLSLQYDDGSSKKVSDKEAKNVQETALKHTKKALEYLEKAKLEDDPDTWVQVAEAYIDLGNLLDNESAEQEEAYKTAEEILGKANKASHGKFQDVLDNFLQG</sequence>